<protein>
    <recommendedName>
        <fullName evidence="1">Endoribonuclease YbeY</fullName>
        <ecNumber evidence="1">3.1.-.-</ecNumber>
    </recommendedName>
</protein>
<gene>
    <name evidence="1" type="primary">ybeY</name>
    <name type="ordered locus">XOO2769</name>
</gene>
<keyword id="KW-0963">Cytoplasm</keyword>
<keyword id="KW-0255">Endonuclease</keyword>
<keyword id="KW-0378">Hydrolase</keyword>
<keyword id="KW-0479">Metal-binding</keyword>
<keyword id="KW-0540">Nuclease</keyword>
<keyword id="KW-1185">Reference proteome</keyword>
<keyword id="KW-0690">Ribosome biogenesis</keyword>
<keyword id="KW-0698">rRNA processing</keyword>
<keyword id="KW-0862">Zinc</keyword>
<proteinExistence type="inferred from homology"/>
<name>YBEY_XANOR</name>
<sequence>MTKGPIRLDVAVSYALPRAGLPSAVSFRKWVAAALKGRIREADLAVRLVDEKEGCSLNHHYRGKDYATNVLSFPAELPEGLPKGIKMPLLGDLVICAPVVAREAAEQGKSLAAHYAHLTVHGTLHLLGWDHDDDKEADAMEQLEREILADLGIDDPYAGEQ</sequence>
<dbReference type="EC" id="3.1.-.-" evidence="1"/>
<dbReference type="EMBL" id="AE013598">
    <property type="protein sequence ID" value="AAW76023.1"/>
    <property type="molecule type" value="Genomic_DNA"/>
</dbReference>
<dbReference type="SMR" id="Q5GZ48"/>
<dbReference type="STRING" id="291331.XOO2769"/>
<dbReference type="KEGG" id="xoo:XOO2769"/>
<dbReference type="PATRIC" id="fig|291331.8.peg.3062"/>
<dbReference type="HOGENOM" id="CLU_106710_0_1_6"/>
<dbReference type="Proteomes" id="UP000006735">
    <property type="component" value="Chromosome"/>
</dbReference>
<dbReference type="GO" id="GO:0005737">
    <property type="term" value="C:cytoplasm"/>
    <property type="evidence" value="ECO:0007669"/>
    <property type="project" value="UniProtKB-SubCell"/>
</dbReference>
<dbReference type="GO" id="GO:0004222">
    <property type="term" value="F:metalloendopeptidase activity"/>
    <property type="evidence" value="ECO:0007669"/>
    <property type="project" value="InterPro"/>
</dbReference>
<dbReference type="GO" id="GO:0004521">
    <property type="term" value="F:RNA endonuclease activity"/>
    <property type="evidence" value="ECO:0007669"/>
    <property type="project" value="UniProtKB-UniRule"/>
</dbReference>
<dbReference type="GO" id="GO:0008270">
    <property type="term" value="F:zinc ion binding"/>
    <property type="evidence" value="ECO:0007669"/>
    <property type="project" value="UniProtKB-UniRule"/>
</dbReference>
<dbReference type="GO" id="GO:0006364">
    <property type="term" value="P:rRNA processing"/>
    <property type="evidence" value="ECO:0007669"/>
    <property type="project" value="UniProtKB-UniRule"/>
</dbReference>
<dbReference type="Gene3D" id="3.40.390.30">
    <property type="entry name" value="Metalloproteases ('zincins'), catalytic domain"/>
    <property type="match status" value="1"/>
</dbReference>
<dbReference type="HAMAP" id="MF_00009">
    <property type="entry name" value="Endoribonucl_YbeY"/>
    <property type="match status" value="1"/>
</dbReference>
<dbReference type="InterPro" id="IPR023091">
    <property type="entry name" value="MetalPrtase_cat_dom_sf_prd"/>
</dbReference>
<dbReference type="InterPro" id="IPR002036">
    <property type="entry name" value="YbeY"/>
</dbReference>
<dbReference type="InterPro" id="IPR020549">
    <property type="entry name" value="YbeY_CS"/>
</dbReference>
<dbReference type="NCBIfam" id="TIGR00043">
    <property type="entry name" value="rRNA maturation RNase YbeY"/>
    <property type="match status" value="1"/>
</dbReference>
<dbReference type="PANTHER" id="PTHR46986">
    <property type="entry name" value="ENDORIBONUCLEASE YBEY, CHLOROPLASTIC"/>
    <property type="match status" value="1"/>
</dbReference>
<dbReference type="PANTHER" id="PTHR46986:SF1">
    <property type="entry name" value="ENDORIBONUCLEASE YBEY, CHLOROPLASTIC"/>
    <property type="match status" value="1"/>
</dbReference>
<dbReference type="Pfam" id="PF02130">
    <property type="entry name" value="YbeY"/>
    <property type="match status" value="1"/>
</dbReference>
<dbReference type="SUPFAM" id="SSF55486">
    <property type="entry name" value="Metalloproteases ('zincins'), catalytic domain"/>
    <property type="match status" value="1"/>
</dbReference>
<dbReference type="PROSITE" id="PS01306">
    <property type="entry name" value="UPF0054"/>
    <property type="match status" value="1"/>
</dbReference>
<organism>
    <name type="scientific">Xanthomonas oryzae pv. oryzae (strain KACC10331 / KXO85)</name>
    <dbReference type="NCBI Taxonomy" id="291331"/>
    <lineage>
        <taxon>Bacteria</taxon>
        <taxon>Pseudomonadati</taxon>
        <taxon>Pseudomonadota</taxon>
        <taxon>Gammaproteobacteria</taxon>
        <taxon>Lysobacterales</taxon>
        <taxon>Lysobacteraceae</taxon>
        <taxon>Xanthomonas</taxon>
    </lineage>
</organism>
<accession>Q5GZ48</accession>
<reference key="1">
    <citation type="journal article" date="2005" name="Nucleic Acids Res.">
        <title>The genome sequence of Xanthomonas oryzae pathovar oryzae KACC10331, the bacterial blight pathogen of rice.</title>
        <authorList>
            <person name="Lee B.-M."/>
            <person name="Park Y.-J."/>
            <person name="Park D.-S."/>
            <person name="Kang H.-W."/>
            <person name="Kim J.-G."/>
            <person name="Song E.-S."/>
            <person name="Park I.-C."/>
            <person name="Yoon U.-H."/>
            <person name="Hahn J.-H."/>
            <person name="Koo B.-S."/>
            <person name="Lee G.-B."/>
            <person name="Kim H."/>
            <person name="Park H.-S."/>
            <person name="Yoon K.-O."/>
            <person name="Kim J.-H."/>
            <person name="Jung C.-H."/>
            <person name="Koh N.-H."/>
            <person name="Seo J.-S."/>
            <person name="Go S.-J."/>
        </authorList>
    </citation>
    <scope>NUCLEOTIDE SEQUENCE [LARGE SCALE GENOMIC DNA]</scope>
    <source>
        <strain>KACC10331 / KXO85</strain>
    </source>
</reference>
<feature type="chain" id="PRO_0000102572" description="Endoribonuclease YbeY">
    <location>
        <begin position="1"/>
        <end position="161"/>
    </location>
</feature>
<feature type="binding site" evidence="1">
    <location>
        <position position="121"/>
    </location>
    <ligand>
        <name>Zn(2+)</name>
        <dbReference type="ChEBI" id="CHEBI:29105"/>
        <note>catalytic</note>
    </ligand>
</feature>
<feature type="binding site" evidence="1">
    <location>
        <position position="125"/>
    </location>
    <ligand>
        <name>Zn(2+)</name>
        <dbReference type="ChEBI" id="CHEBI:29105"/>
        <note>catalytic</note>
    </ligand>
</feature>
<feature type="binding site" evidence="1">
    <location>
        <position position="131"/>
    </location>
    <ligand>
        <name>Zn(2+)</name>
        <dbReference type="ChEBI" id="CHEBI:29105"/>
        <note>catalytic</note>
    </ligand>
</feature>
<evidence type="ECO:0000255" key="1">
    <source>
        <dbReference type="HAMAP-Rule" id="MF_00009"/>
    </source>
</evidence>
<comment type="function">
    <text evidence="1">Single strand-specific metallo-endoribonuclease involved in late-stage 70S ribosome quality control and in maturation of the 3' terminus of the 16S rRNA.</text>
</comment>
<comment type="cofactor">
    <cofactor evidence="1">
        <name>Zn(2+)</name>
        <dbReference type="ChEBI" id="CHEBI:29105"/>
    </cofactor>
    <text evidence="1">Binds 1 zinc ion.</text>
</comment>
<comment type="subcellular location">
    <subcellularLocation>
        <location evidence="1">Cytoplasm</location>
    </subcellularLocation>
</comment>
<comment type="similarity">
    <text evidence="1">Belongs to the endoribonuclease YbeY family.</text>
</comment>